<accession>Q6AYT5</accession>
<gene>
    <name evidence="2" type="primary">Armt1</name>
</gene>
<organism>
    <name type="scientific">Rattus norvegicus</name>
    <name type="common">Rat</name>
    <dbReference type="NCBI Taxonomy" id="10116"/>
    <lineage>
        <taxon>Eukaryota</taxon>
        <taxon>Metazoa</taxon>
        <taxon>Chordata</taxon>
        <taxon>Craniata</taxon>
        <taxon>Vertebrata</taxon>
        <taxon>Euteleostomi</taxon>
        <taxon>Mammalia</taxon>
        <taxon>Eutheria</taxon>
        <taxon>Euarchontoglires</taxon>
        <taxon>Glires</taxon>
        <taxon>Rodentia</taxon>
        <taxon>Myomorpha</taxon>
        <taxon>Muroidea</taxon>
        <taxon>Muridae</taxon>
        <taxon>Murinae</taxon>
        <taxon>Rattus</taxon>
    </lineage>
</organism>
<feature type="initiator methionine" description="Removed" evidence="2">
    <location>
        <position position="1"/>
    </location>
</feature>
<feature type="chain" id="PRO_0000230797" description="Damage-control phosphatase ARMT1">
    <location>
        <begin position="2"/>
        <end position="439"/>
    </location>
</feature>
<feature type="short sequence motif" description="Subfamily III RTxK motif" evidence="1">
    <location>
        <begin position="399"/>
        <end position="402"/>
    </location>
</feature>
<feature type="binding site" evidence="1">
    <location>
        <begin position="251"/>
        <end position="252"/>
    </location>
    <ligand>
        <name>substrate</name>
    </ligand>
</feature>
<feature type="binding site" evidence="1">
    <location>
        <position position="251"/>
    </location>
    <ligand>
        <name>Mn(2+)</name>
        <dbReference type="ChEBI" id="CHEBI:29035"/>
        <note>catalytic</note>
    </ligand>
</feature>
<feature type="binding site" evidence="1">
    <location>
        <position position="252"/>
    </location>
    <ligand>
        <name>Mn(2+)</name>
        <dbReference type="ChEBI" id="CHEBI:29035"/>
        <note>catalytic</note>
    </ligand>
</feature>
<feature type="binding site" evidence="2">
    <location>
        <position position="256"/>
    </location>
    <ligand>
        <name>S-adenosyl-L-methionine</name>
        <dbReference type="ChEBI" id="CHEBI:59789"/>
    </ligand>
</feature>
<feature type="binding site" evidence="1">
    <location>
        <position position="289"/>
    </location>
    <ligand>
        <name>Mn(2+)</name>
        <dbReference type="ChEBI" id="CHEBI:29035"/>
        <note>catalytic</note>
    </ligand>
</feature>
<feature type="binding site" evidence="2">
    <location>
        <position position="289"/>
    </location>
    <ligand>
        <name>S-adenosyl-L-methionine</name>
        <dbReference type="ChEBI" id="CHEBI:59789"/>
    </ligand>
</feature>
<feature type="binding site" evidence="1">
    <location>
        <begin position="365"/>
        <end position="369"/>
    </location>
    <ligand>
        <name>substrate</name>
    </ligand>
</feature>
<feature type="binding site" evidence="1">
    <location>
        <position position="402"/>
    </location>
    <ligand>
        <name>substrate</name>
    </ligand>
</feature>
<feature type="modified residue" description="N-acetylalanine" evidence="2">
    <location>
        <position position="2"/>
    </location>
</feature>
<feature type="modified residue" description="Phosphoserine" evidence="4">
    <location>
        <position position="4"/>
    </location>
</feature>
<feature type="modified residue" description="N6-acetyllysine" evidence="2">
    <location>
        <position position="40"/>
    </location>
</feature>
<evidence type="ECO:0000250" key="1">
    <source>
        <dbReference type="UniProtKB" id="Q04371"/>
    </source>
</evidence>
<evidence type="ECO:0000250" key="2">
    <source>
        <dbReference type="UniProtKB" id="Q9H993"/>
    </source>
</evidence>
<evidence type="ECO:0000305" key="3"/>
<evidence type="ECO:0007744" key="4">
    <source>
    </source>
</evidence>
<sequence>MAESPAFLSAQDVGSFAYLTIKDRTPQILTKVIDTLHRHKSEFFEKHGEEGVEAEKKAISLLSKLRNELQTDKPIIPLVDKCVDTDIWNQYLEYQRSLLNEGDGEPRWFFSPWLFVECYMYRRIHEAIMQSPPIHDFDVFKESKDENFFESQDSINALCTHLLQLKPITDLGEKQIQDEFFKLLQISLWGNKCDLSLSGGESSSQKADIINSLKDLKPFILVNETESLWALLSKLKKTAEPPAVRVDIVLDNSGFELVTDLVFADFLLSSELATEIHFHGKIIPWFVSDVTVRDFEWIVEHMKGSHLESMSACGAAWEAYVGMKKWVYHDHAFWTLPHPFCAMPQVAPDLYAELQKAGVVLFKGDLNYRKLMGDRKWKFTVPFHQALSGFHPAPLCSIRTLKCELQVGLQPGQAEHLTASDPHWLTTGKYGIFQFDGPL</sequence>
<keyword id="KW-0007">Acetylation</keyword>
<keyword id="KW-0227">DNA damage</keyword>
<keyword id="KW-0378">Hydrolase</keyword>
<keyword id="KW-0464">Manganese</keyword>
<keyword id="KW-0479">Metal-binding</keyword>
<keyword id="KW-0489">Methyltransferase</keyword>
<keyword id="KW-0533">Nickel</keyword>
<keyword id="KW-0597">Phosphoprotein</keyword>
<keyword id="KW-1185">Reference proteome</keyword>
<keyword id="KW-0949">S-adenosyl-L-methionine</keyword>
<keyword id="KW-0808">Transferase</keyword>
<reference key="1">
    <citation type="journal article" date="2004" name="Genome Res.">
        <title>The status, quality, and expansion of the NIH full-length cDNA project: the Mammalian Gene Collection (MGC).</title>
        <authorList>
            <consortium name="The MGC Project Team"/>
        </authorList>
    </citation>
    <scope>NUCLEOTIDE SEQUENCE [LARGE SCALE MRNA]</scope>
    <source>
        <tissue>Lung</tissue>
    </source>
</reference>
<reference key="2">
    <citation type="journal article" date="2012" name="Nat. Commun.">
        <title>Quantitative maps of protein phosphorylation sites across 14 different rat organs and tissues.</title>
        <authorList>
            <person name="Lundby A."/>
            <person name="Secher A."/>
            <person name="Lage K."/>
            <person name="Nordsborg N.B."/>
            <person name="Dmytriyev A."/>
            <person name="Lundby C."/>
            <person name="Olsen J.V."/>
        </authorList>
    </citation>
    <scope>PHOSPHORYLATION [LARGE SCALE ANALYSIS] AT SER-4</scope>
    <scope>IDENTIFICATION BY MASS SPECTROMETRY [LARGE SCALE ANALYSIS]</scope>
</reference>
<name>ARMT1_RAT</name>
<comment type="function">
    <text evidence="1 2">Metal-dependent phosphatase that shows phosphatase activity against several substrates, including fructose-1-phosphate and fructose-6-phosphate (By similarity). Its preference for fructose-1-phosphate, a strong glycating agent that causes DNA damage rather than a canonical yeast metabolite, suggests a damage-control function in hexose phosphate metabolism (By similarity). Has also been shown to have O-methyltransferase activity that methylates glutamate residues of target proteins to form gamma-glutamyl methyl ester residues (By similarity). Possibly methylates PCNA, suggesting it is involved in the DNA damage response (By similarity).</text>
</comment>
<comment type="catalytic activity">
    <reaction evidence="1">
        <text>beta-D-fructose 1-phosphate + H2O = D-fructose + phosphate</text>
        <dbReference type="Rhea" id="RHEA:35603"/>
        <dbReference type="ChEBI" id="CHEBI:15377"/>
        <dbReference type="ChEBI" id="CHEBI:37721"/>
        <dbReference type="ChEBI" id="CHEBI:43474"/>
        <dbReference type="ChEBI" id="CHEBI:138881"/>
    </reaction>
</comment>
<comment type="catalytic activity">
    <reaction evidence="1">
        <text>beta-D-fructose 6-phosphate = dihydroxyacetone + D-glyceraldehyde 3-phosphate</text>
        <dbReference type="Rhea" id="RHEA:28002"/>
        <dbReference type="ChEBI" id="CHEBI:16016"/>
        <dbReference type="ChEBI" id="CHEBI:57634"/>
        <dbReference type="ChEBI" id="CHEBI:59776"/>
    </reaction>
</comment>
<comment type="catalytic activity">
    <reaction evidence="2">
        <text>L-glutamyl-[protein] + S-adenosyl-L-methionine = [protein]-L-glutamate 5-O-methyl ester + S-adenosyl-L-homocysteine</text>
        <dbReference type="Rhea" id="RHEA:24452"/>
        <dbReference type="Rhea" id="RHEA-COMP:10208"/>
        <dbReference type="Rhea" id="RHEA-COMP:10311"/>
        <dbReference type="ChEBI" id="CHEBI:29973"/>
        <dbReference type="ChEBI" id="CHEBI:57856"/>
        <dbReference type="ChEBI" id="CHEBI:59789"/>
        <dbReference type="ChEBI" id="CHEBI:82795"/>
    </reaction>
</comment>
<comment type="cofactor">
    <cofactor evidence="1">
        <name>Mn(2+)</name>
        <dbReference type="ChEBI" id="CHEBI:29035"/>
    </cofactor>
    <cofactor evidence="1">
        <name>Ni(2+)</name>
        <dbReference type="ChEBI" id="CHEBI:49786"/>
    </cofactor>
</comment>
<comment type="domain">
    <text evidence="1">Subfamily III proteins have a conserved RTxK motif about 40-50 residues from the C-terminus; the threonine may be replaced by serine or cysteine.</text>
</comment>
<comment type="PTM">
    <text evidence="2">Automethylated.</text>
</comment>
<comment type="similarity">
    <text evidence="3">Belongs to the damage-control phosphatase family. Sugar phosphate phosphatase III subfamily.</text>
</comment>
<comment type="caution">
    <text evidence="2">Human C6orf211 has been reportedly associated with a protein carboxyl methyltransferase activity, but whether this protein indeed has such an activity remains to be determined (By similarity). It has been later shown to belong to a family of metal-dependent phosphatases implicated in metabolite damage-control (By similarity).</text>
</comment>
<dbReference type="EC" id="3.1.3.-" evidence="1"/>
<dbReference type="EC" id="2.1.1.-" evidence="2"/>
<dbReference type="EMBL" id="BC078920">
    <property type="protein sequence ID" value="AAH78920.1"/>
    <property type="molecule type" value="mRNA"/>
</dbReference>
<dbReference type="RefSeq" id="NP_001017447.1">
    <property type="nucleotide sequence ID" value="NM_001017447.1"/>
</dbReference>
<dbReference type="SMR" id="Q6AYT5"/>
<dbReference type="FunCoup" id="Q6AYT5">
    <property type="interactions" value="2495"/>
</dbReference>
<dbReference type="STRING" id="10116.ENSRNOP00000026367"/>
<dbReference type="iPTMnet" id="Q6AYT5"/>
<dbReference type="PhosphoSitePlus" id="Q6AYT5"/>
<dbReference type="jPOST" id="Q6AYT5"/>
<dbReference type="PaxDb" id="10116-ENSRNOP00000026367"/>
<dbReference type="Ensembl" id="ENSRNOT00000026367.7">
    <property type="protein sequence ID" value="ENSRNOP00000026367.4"/>
    <property type="gene ID" value="ENSRNOG00000019489.8"/>
</dbReference>
<dbReference type="GeneID" id="292267"/>
<dbReference type="KEGG" id="rno:292267"/>
<dbReference type="AGR" id="RGD:1305235"/>
<dbReference type="CTD" id="79624"/>
<dbReference type="RGD" id="1305235">
    <property type="gene designation" value="Armt1"/>
</dbReference>
<dbReference type="eggNOG" id="KOG3870">
    <property type="taxonomic scope" value="Eukaryota"/>
</dbReference>
<dbReference type="GeneTree" id="ENSGT00530000064023"/>
<dbReference type="HOGENOM" id="CLU_030117_0_0_1"/>
<dbReference type="InParanoid" id="Q6AYT5"/>
<dbReference type="OrthoDB" id="42185at9989"/>
<dbReference type="PhylomeDB" id="Q6AYT5"/>
<dbReference type="TreeFam" id="TF314853"/>
<dbReference type="PRO" id="PR:Q6AYT5"/>
<dbReference type="Proteomes" id="UP000002494">
    <property type="component" value="Chromosome 1"/>
</dbReference>
<dbReference type="Bgee" id="ENSRNOG00000019489">
    <property type="expression patterns" value="Expressed in testis and 19 other cell types or tissues"/>
</dbReference>
<dbReference type="ExpressionAtlas" id="Q6AYT5">
    <property type="expression patterns" value="baseline and differential"/>
</dbReference>
<dbReference type="GO" id="GO:0019899">
    <property type="term" value="F:enzyme binding"/>
    <property type="evidence" value="ECO:0000266"/>
    <property type="project" value="RGD"/>
</dbReference>
<dbReference type="GO" id="GO:0097023">
    <property type="term" value="F:fructose 6-phosphate aldolase activity"/>
    <property type="evidence" value="ECO:0007669"/>
    <property type="project" value="RHEA"/>
</dbReference>
<dbReference type="GO" id="GO:0103026">
    <property type="term" value="F:fructose-1-phosphatase activity"/>
    <property type="evidence" value="ECO:0007669"/>
    <property type="project" value="RHEA"/>
</dbReference>
<dbReference type="GO" id="GO:0046872">
    <property type="term" value="F:metal ion binding"/>
    <property type="evidence" value="ECO:0007669"/>
    <property type="project" value="UniProtKB-KW"/>
</dbReference>
<dbReference type="GO" id="GO:0016791">
    <property type="term" value="F:phosphatase activity"/>
    <property type="evidence" value="ECO:0000318"/>
    <property type="project" value="GO_Central"/>
</dbReference>
<dbReference type="GO" id="GO:0051998">
    <property type="term" value="F:protein carboxyl O-methyltransferase activity"/>
    <property type="evidence" value="ECO:0000250"/>
    <property type="project" value="UniProtKB"/>
</dbReference>
<dbReference type="GO" id="GO:0008983">
    <property type="term" value="F:protein-glutamate O-methyltransferase activity"/>
    <property type="evidence" value="ECO:0007669"/>
    <property type="project" value="RHEA"/>
</dbReference>
<dbReference type="GO" id="GO:0008757">
    <property type="term" value="F:S-adenosylmethionine-dependent methyltransferase activity"/>
    <property type="evidence" value="ECO:0000250"/>
    <property type="project" value="UniProtKB"/>
</dbReference>
<dbReference type="GO" id="GO:0006974">
    <property type="term" value="P:DNA damage response"/>
    <property type="evidence" value="ECO:0000250"/>
    <property type="project" value="UniProtKB"/>
</dbReference>
<dbReference type="GO" id="GO:0032259">
    <property type="term" value="P:methylation"/>
    <property type="evidence" value="ECO:0007669"/>
    <property type="project" value="UniProtKB-KW"/>
</dbReference>
<dbReference type="FunFam" id="3.40.50.10880:FF:000002">
    <property type="entry name" value="Acidic residue methyltransferase 1"/>
    <property type="match status" value="1"/>
</dbReference>
<dbReference type="FunFam" id="1.20.930.60:FF:000001">
    <property type="entry name" value="protein-glutamate O-methyltransferase isoform X1"/>
    <property type="match status" value="1"/>
</dbReference>
<dbReference type="Gene3D" id="1.20.930.60">
    <property type="match status" value="1"/>
</dbReference>
<dbReference type="Gene3D" id="3.40.50.10880">
    <property type="entry name" value="Uncharacterised protein PF01937, DUF89, domain 3"/>
    <property type="match status" value="1"/>
</dbReference>
<dbReference type="InterPro" id="IPR036075">
    <property type="entry name" value="ARMT-1-like_metal-bd_sf"/>
</dbReference>
<dbReference type="InterPro" id="IPR039763">
    <property type="entry name" value="ARMT1"/>
</dbReference>
<dbReference type="InterPro" id="IPR002791">
    <property type="entry name" value="ARMT1-like_metal-bd"/>
</dbReference>
<dbReference type="PANTHER" id="PTHR12260">
    <property type="entry name" value="DAMAGE-CONTROL PHOSPHATASE ARMT1"/>
    <property type="match status" value="1"/>
</dbReference>
<dbReference type="PANTHER" id="PTHR12260:SF6">
    <property type="entry name" value="DAMAGE-CONTROL PHOSPHATASE ARMT1"/>
    <property type="match status" value="1"/>
</dbReference>
<dbReference type="Pfam" id="PF01937">
    <property type="entry name" value="ARMT1-like_dom"/>
    <property type="match status" value="1"/>
</dbReference>
<dbReference type="SUPFAM" id="SSF111321">
    <property type="entry name" value="AF1104-like"/>
    <property type="match status" value="1"/>
</dbReference>
<proteinExistence type="evidence at protein level"/>
<protein>
    <recommendedName>
        <fullName evidence="1">Damage-control phosphatase ARMT1</fullName>
        <ecNumber evidence="1">3.1.3.-</ecNumber>
    </recommendedName>
    <alternativeName>
        <fullName evidence="2">Acidic residue methyltransferase 1</fullName>
    </alternativeName>
    <alternativeName>
        <fullName evidence="2">Protein-glutamate O-methyltransferase</fullName>
        <ecNumber evidence="2">2.1.1.-</ecNumber>
    </alternativeName>
    <alternativeName>
        <fullName evidence="1">Sugar phosphate phosphatase ARMT1</fullName>
    </alternativeName>
</protein>